<accession>P17932</accession>
<organism>
    <name type="scientific">Mus musculus</name>
    <name type="common">Mouse</name>
    <dbReference type="NCBI Taxonomy" id="10090"/>
    <lineage>
        <taxon>Eukaryota</taxon>
        <taxon>Metazoa</taxon>
        <taxon>Chordata</taxon>
        <taxon>Craniata</taxon>
        <taxon>Vertebrata</taxon>
        <taxon>Euteleostomi</taxon>
        <taxon>Mammalia</taxon>
        <taxon>Eutheria</taxon>
        <taxon>Euarchontoglires</taxon>
        <taxon>Glires</taxon>
        <taxon>Rodentia</taxon>
        <taxon>Myomorpha</taxon>
        <taxon>Muroidea</taxon>
        <taxon>Muridae</taxon>
        <taxon>Murinae</taxon>
        <taxon>Mus</taxon>
        <taxon>Mus</taxon>
    </lineage>
</organism>
<reference key="1">
    <citation type="journal article" date="1988" name="Nucleic Acids Res.">
        <title>Analysis of potential expression of highly related members of the ribosomal protein L32 gene family.</title>
        <authorList>
            <person name="Jacks C.M."/>
            <person name="Biltz R.E."/>
            <person name="Hackett P.B."/>
        </authorList>
    </citation>
    <scope>NUCLEOTIDE SEQUENCE [GENOMIC DNA]</scope>
</reference>
<reference key="2">
    <citation type="journal article" date="1988" name="Gene">
        <title>Sequence analysis of a processed gene coding for mouse ribosomal protein L32.</title>
        <authorList>
            <person name="Jacks C.M."/>
            <person name="Powaser C.B."/>
            <person name="Hackett P.B."/>
        </authorList>
    </citation>
    <scope>NUCLEOTIDE SEQUENCE [GENOMIC DNA]</scope>
</reference>
<gene>
    <name type="primary">Rpl32-ps</name>
</gene>
<protein>
    <recommendedName>
        <fullName evidence="1">Putative large ribosomal subunit protein eL32'</fullName>
    </recommendedName>
    <alternativeName>
        <fullName>60S ribosomal protein L32'</fullName>
    </alternativeName>
</protein>
<name>RL32P_MOUSE</name>
<feature type="chain" id="PRO_0000131118" description="Putative large ribosomal subunit protein eL32'">
    <location>
        <begin position="1"/>
        <end position="135"/>
    </location>
</feature>
<proteinExistence type="uncertain"/>
<dbReference type="EMBL" id="M35397">
    <property type="protein sequence ID" value="AAA40065.1"/>
    <property type="molecule type" value="Genomic_DNA"/>
</dbReference>
<dbReference type="EMBL" id="M23453">
    <property type="protein sequence ID" value="AAA40068.1"/>
    <property type="molecule type" value="Genomic_DNA"/>
</dbReference>
<dbReference type="PIR" id="I58276">
    <property type="entry name" value="I58276"/>
</dbReference>
<dbReference type="SMR" id="P17932"/>
<dbReference type="FunCoup" id="P17932">
    <property type="interactions" value="264"/>
</dbReference>
<dbReference type="jPOST" id="P17932"/>
<dbReference type="PeptideAtlas" id="P17932"/>
<dbReference type="ProteomicsDB" id="253300"/>
<dbReference type="Pumba" id="P17932"/>
<dbReference type="AGR" id="MGI:98039"/>
<dbReference type="MGI" id="MGI:98039">
    <property type="gene designation" value="Rpl32-ps"/>
</dbReference>
<dbReference type="InParanoid" id="P17932"/>
<dbReference type="PhylomeDB" id="P17932"/>
<dbReference type="Proteomes" id="UP000000589">
    <property type="component" value="Unplaced"/>
</dbReference>
<dbReference type="RNAct" id="P17932">
    <property type="molecule type" value="protein"/>
</dbReference>
<dbReference type="GO" id="GO:0005829">
    <property type="term" value="C:cytosol"/>
    <property type="evidence" value="ECO:0000304"/>
    <property type="project" value="Reactome"/>
</dbReference>
<dbReference type="GO" id="GO:1990904">
    <property type="term" value="C:ribonucleoprotein complex"/>
    <property type="evidence" value="ECO:0007669"/>
    <property type="project" value="UniProtKB-KW"/>
</dbReference>
<dbReference type="GO" id="GO:0005840">
    <property type="term" value="C:ribosome"/>
    <property type="evidence" value="ECO:0007669"/>
    <property type="project" value="UniProtKB-KW"/>
</dbReference>
<dbReference type="GO" id="GO:0003735">
    <property type="term" value="F:structural constituent of ribosome"/>
    <property type="evidence" value="ECO:0007669"/>
    <property type="project" value="InterPro"/>
</dbReference>
<dbReference type="GO" id="GO:0006412">
    <property type="term" value="P:translation"/>
    <property type="evidence" value="ECO:0007669"/>
    <property type="project" value="InterPro"/>
</dbReference>
<dbReference type="CDD" id="cd00513">
    <property type="entry name" value="Ribosomal_L32_L32e"/>
    <property type="match status" value="1"/>
</dbReference>
<dbReference type="InterPro" id="IPR001515">
    <property type="entry name" value="Ribosomal_eL32"/>
</dbReference>
<dbReference type="InterPro" id="IPR018263">
    <property type="entry name" value="Ribosomal_eL32_CS"/>
</dbReference>
<dbReference type="InterPro" id="IPR036351">
    <property type="entry name" value="Ribosomal_eL32_sf"/>
</dbReference>
<dbReference type="PANTHER" id="PTHR23413">
    <property type="entry name" value="60S RIBOSOMAL PROTEIN L32 AND DNA-DIRECTED RNA POLYMERASE II, SUBUNIT N"/>
    <property type="match status" value="1"/>
</dbReference>
<dbReference type="PANTHER" id="PTHR23413:SF6">
    <property type="entry name" value="LARGE RIBOSOMAL SUBUNIT PROTEIN EL32"/>
    <property type="match status" value="1"/>
</dbReference>
<dbReference type="Pfam" id="PF01655">
    <property type="entry name" value="Ribosomal_L32e"/>
    <property type="match status" value="1"/>
</dbReference>
<dbReference type="SMART" id="SM01393">
    <property type="entry name" value="Ribosomal_L32e"/>
    <property type="match status" value="1"/>
</dbReference>
<dbReference type="SUPFAM" id="SSF52042">
    <property type="entry name" value="Ribosomal protein L32e"/>
    <property type="match status" value="1"/>
</dbReference>
<dbReference type="PROSITE" id="PS00580">
    <property type="entry name" value="RIBOSOMAL_L32E"/>
    <property type="match status" value="1"/>
</dbReference>
<evidence type="ECO:0000305" key="1"/>
<comment type="similarity">
    <text evidence="1">Belongs to the eukaryotic ribosomal protein eL32 family.</text>
</comment>
<comment type="caution">
    <text evidence="1">Could be the product of a pseudogene.</text>
</comment>
<keyword id="KW-1185">Reference proteome</keyword>
<keyword id="KW-0687">Ribonucleoprotein</keyword>
<keyword id="KW-0689">Ribosomal protein</keyword>
<sequence length="135" mass="16011">MAALRPLVKPKIVKKRTKKFIRHQSDRYVKIKWNWRKPRGIDNRVRRRFKGQILMPNIGYRSNKKTKHTLSSGFRKFLVHNIKEPEVLLMCNKSYRAEIAHNVSSKNRKAIVERAAQLAIRVTNPNTRLHSEENE</sequence>